<reference key="1">
    <citation type="journal article" date="1997" name="J. Bacteriol.">
        <title>Complete genome sequence of Methanobacterium thermoautotrophicum deltaH: functional analysis and comparative genomics.</title>
        <authorList>
            <person name="Smith D.R."/>
            <person name="Doucette-Stamm L.A."/>
            <person name="Deloughery C."/>
            <person name="Lee H.-M."/>
            <person name="Dubois J."/>
            <person name="Aldredge T."/>
            <person name="Bashirzadeh R."/>
            <person name="Blakely D."/>
            <person name="Cook R."/>
            <person name="Gilbert K."/>
            <person name="Harrison D."/>
            <person name="Hoang L."/>
            <person name="Keagle P."/>
            <person name="Lumm W."/>
            <person name="Pothier B."/>
            <person name="Qiu D."/>
            <person name="Spadafora R."/>
            <person name="Vicare R."/>
            <person name="Wang Y."/>
            <person name="Wierzbowski J."/>
            <person name="Gibson R."/>
            <person name="Jiwani N."/>
            <person name="Caruso A."/>
            <person name="Bush D."/>
            <person name="Safer H."/>
            <person name="Patwell D."/>
            <person name="Prabhakar S."/>
            <person name="McDougall S."/>
            <person name="Shimer G."/>
            <person name="Goyal A."/>
            <person name="Pietrovski S."/>
            <person name="Church G.M."/>
            <person name="Daniels C.J."/>
            <person name="Mao J.-I."/>
            <person name="Rice P."/>
            <person name="Noelling J."/>
            <person name="Reeve J.N."/>
        </authorList>
    </citation>
    <scope>NUCLEOTIDE SEQUENCE [LARGE SCALE GENOMIC DNA]</scope>
    <source>
        <strain>ATCC 29096 / DSM 1053 / JCM 10044 / NBRC 100330 / Delta H</strain>
    </source>
</reference>
<sequence>MICITGTPGVGKTTLAGILRERGLEVISLGELIRQKGFVLGRDPIRGYLEADIEAACSHLQEMEGLDVVEGHLSHLCRSCSMVIVLRLHPEVLRGRLEGRGYPEGKVLENLEAEALDVCTVEAFEIHGERVHEVDTTGRSPHEVADIITDIMNGSRVCPPGGVDFSGWLLG</sequence>
<evidence type="ECO:0000255" key="1">
    <source>
        <dbReference type="HAMAP-Rule" id="MF_00039"/>
    </source>
</evidence>
<evidence type="ECO:0000305" key="2"/>
<accession>O27656</accession>
<name>KAD6_METTH</name>
<dbReference type="EC" id="2.7.4.3" evidence="1"/>
<dbReference type="EMBL" id="AE000666">
    <property type="protein sequence ID" value="AAB86092.1"/>
    <property type="molecule type" value="Genomic_DNA"/>
</dbReference>
<dbReference type="PIR" id="C69083">
    <property type="entry name" value="C69083"/>
</dbReference>
<dbReference type="RefSeq" id="WP_010877227.1">
    <property type="nucleotide sequence ID" value="NC_000916.1"/>
</dbReference>
<dbReference type="SMR" id="O27656"/>
<dbReference type="FunCoup" id="O27656">
    <property type="interactions" value="197"/>
</dbReference>
<dbReference type="STRING" id="187420.MTH_1619"/>
<dbReference type="PaxDb" id="187420-MTH_1619"/>
<dbReference type="EnsemblBacteria" id="AAB86092">
    <property type="protein sequence ID" value="AAB86092"/>
    <property type="gene ID" value="MTH_1619"/>
</dbReference>
<dbReference type="GeneID" id="1470704"/>
<dbReference type="KEGG" id="mth:MTH_1619"/>
<dbReference type="PATRIC" id="fig|187420.15.peg.1583"/>
<dbReference type="HOGENOM" id="CLU_079096_0_1_2"/>
<dbReference type="InParanoid" id="O27656"/>
<dbReference type="Proteomes" id="UP000005223">
    <property type="component" value="Chromosome"/>
</dbReference>
<dbReference type="GO" id="GO:0004017">
    <property type="term" value="F:adenylate kinase activity"/>
    <property type="evidence" value="ECO:0007669"/>
    <property type="project" value="UniProtKB-UniRule"/>
</dbReference>
<dbReference type="GO" id="GO:0005524">
    <property type="term" value="F:ATP binding"/>
    <property type="evidence" value="ECO:0007669"/>
    <property type="project" value="UniProtKB-UniRule"/>
</dbReference>
<dbReference type="GO" id="GO:0016887">
    <property type="term" value="F:ATP hydrolysis activity"/>
    <property type="evidence" value="ECO:0007669"/>
    <property type="project" value="InterPro"/>
</dbReference>
<dbReference type="GO" id="GO:0042274">
    <property type="term" value="P:ribosomal small subunit biogenesis"/>
    <property type="evidence" value="ECO:0007669"/>
    <property type="project" value="UniProtKB-UniRule"/>
</dbReference>
<dbReference type="GO" id="GO:0006364">
    <property type="term" value="P:rRNA processing"/>
    <property type="evidence" value="ECO:0007669"/>
    <property type="project" value="UniProtKB-KW"/>
</dbReference>
<dbReference type="Gene3D" id="3.40.50.300">
    <property type="entry name" value="P-loop containing nucleotide triphosphate hydrolases"/>
    <property type="match status" value="1"/>
</dbReference>
<dbReference type="HAMAP" id="MF_00039">
    <property type="entry name" value="Adenylate_kinase_AK6"/>
    <property type="match status" value="1"/>
</dbReference>
<dbReference type="InterPro" id="IPR020618">
    <property type="entry name" value="Adenyl_kinase_AK6"/>
</dbReference>
<dbReference type="InterPro" id="IPR027417">
    <property type="entry name" value="P-loop_NTPase"/>
</dbReference>
<dbReference type="PANTHER" id="PTHR12595:SF0">
    <property type="entry name" value="ADENYLATE KINASE ISOENZYME 6"/>
    <property type="match status" value="1"/>
</dbReference>
<dbReference type="PANTHER" id="PTHR12595">
    <property type="entry name" value="POS9-ACTIVATING FACTOR FAP7-RELATED"/>
    <property type="match status" value="1"/>
</dbReference>
<dbReference type="Pfam" id="PF13238">
    <property type="entry name" value="AAA_18"/>
    <property type="match status" value="1"/>
</dbReference>
<dbReference type="SUPFAM" id="SSF52540">
    <property type="entry name" value="P-loop containing nucleoside triphosphate hydrolases"/>
    <property type="match status" value="1"/>
</dbReference>
<comment type="function">
    <text evidence="1">Broad-specificity nucleoside monophosphate (NMP) kinase that catalyzes the reversible transfer of the terminal phosphate group between nucleoside triphosphates and monophosphates. Also has ATPase activity. Involved in the late maturation steps of the 30S ribosomal particles, specifically 16S rRNA maturation. While NMP activity is not required for ribosome maturation, ATPase activity is. Associates transiently with small ribosomal subunit protein uS11. ATP hydrolysis breaks the interaction with uS11. May temporarily remove uS11 from the ribosome to enable a conformational change of the ribosomal RNA that is needed for the final maturation step of the small ribosomal subunit.</text>
</comment>
<comment type="catalytic activity">
    <reaction evidence="1">
        <text>AMP + ATP = 2 ADP</text>
        <dbReference type="Rhea" id="RHEA:12973"/>
        <dbReference type="ChEBI" id="CHEBI:30616"/>
        <dbReference type="ChEBI" id="CHEBI:456215"/>
        <dbReference type="ChEBI" id="CHEBI:456216"/>
        <dbReference type="EC" id="2.7.4.3"/>
    </reaction>
</comment>
<comment type="catalytic activity">
    <reaction evidence="1">
        <text>ATP + H2O = ADP + phosphate + H(+)</text>
        <dbReference type="Rhea" id="RHEA:13065"/>
        <dbReference type="ChEBI" id="CHEBI:15377"/>
        <dbReference type="ChEBI" id="CHEBI:15378"/>
        <dbReference type="ChEBI" id="CHEBI:30616"/>
        <dbReference type="ChEBI" id="CHEBI:43474"/>
        <dbReference type="ChEBI" id="CHEBI:456216"/>
    </reaction>
</comment>
<comment type="subunit">
    <text evidence="1">Interacts with uS11. Not a structural component of 40S pre-ribosomes, but transiently interacts with them by binding to uS11.</text>
</comment>
<comment type="similarity">
    <text evidence="1 2">Belongs to the adenylate kinase family. AK6 subfamily.</text>
</comment>
<gene>
    <name type="ordered locus">MTH_1619</name>
</gene>
<feature type="chain" id="PRO_0000153909" description="Putative adenylate kinase">
    <location>
        <begin position="1"/>
        <end position="171"/>
    </location>
</feature>
<feature type="region of interest" description="NMP" evidence="1">
    <location>
        <begin position="28"/>
        <end position="51"/>
    </location>
</feature>
<feature type="region of interest" description="LID" evidence="1">
    <location>
        <begin position="99"/>
        <end position="109"/>
    </location>
</feature>
<feature type="binding site" evidence="1">
    <location>
        <position position="9"/>
    </location>
    <ligand>
        <name>ATP</name>
        <dbReference type="ChEBI" id="CHEBI:30616"/>
    </ligand>
</feature>
<feature type="binding site" evidence="1">
    <location>
        <position position="11"/>
    </location>
    <ligand>
        <name>ATP</name>
        <dbReference type="ChEBI" id="CHEBI:30616"/>
    </ligand>
</feature>
<feature type="binding site" evidence="1">
    <location>
        <position position="12"/>
    </location>
    <ligand>
        <name>ATP</name>
        <dbReference type="ChEBI" id="CHEBI:30616"/>
    </ligand>
</feature>
<feature type="binding site" evidence="1">
    <location>
        <position position="13"/>
    </location>
    <ligand>
        <name>ATP</name>
        <dbReference type="ChEBI" id="CHEBI:30616"/>
    </ligand>
</feature>
<feature type="binding site" evidence="1">
    <location>
        <position position="14"/>
    </location>
    <ligand>
        <name>ATP</name>
        <dbReference type="ChEBI" id="CHEBI:30616"/>
    </ligand>
</feature>
<feature type="binding site" evidence="1">
    <location>
        <position position="100"/>
    </location>
    <ligand>
        <name>ATP</name>
        <dbReference type="ChEBI" id="CHEBI:30616"/>
    </ligand>
</feature>
<keyword id="KW-0067">ATP-binding</keyword>
<keyword id="KW-0418">Kinase</keyword>
<keyword id="KW-0547">Nucleotide-binding</keyword>
<keyword id="KW-1185">Reference proteome</keyword>
<keyword id="KW-0690">Ribosome biogenesis</keyword>
<keyword id="KW-0698">rRNA processing</keyword>
<keyword id="KW-0808">Transferase</keyword>
<protein>
    <recommendedName>
        <fullName evidence="1">Putative adenylate kinase</fullName>
        <shortName evidence="1">AK</shortName>
        <ecNumber evidence="1">2.7.4.3</ecNumber>
    </recommendedName>
    <alternativeName>
        <fullName evidence="1">ATP-AMP transphosphorylase</fullName>
    </alternativeName>
</protein>
<proteinExistence type="inferred from homology"/>
<organism>
    <name type="scientific">Methanothermobacter thermautotrophicus (strain ATCC 29096 / DSM 1053 / JCM 10044 / NBRC 100330 / Delta H)</name>
    <name type="common">Methanobacterium thermoautotrophicum</name>
    <dbReference type="NCBI Taxonomy" id="187420"/>
    <lineage>
        <taxon>Archaea</taxon>
        <taxon>Methanobacteriati</taxon>
        <taxon>Methanobacteriota</taxon>
        <taxon>Methanomada group</taxon>
        <taxon>Methanobacteria</taxon>
        <taxon>Methanobacteriales</taxon>
        <taxon>Methanobacteriaceae</taxon>
        <taxon>Methanothermobacter</taxon>
    </lineage>
</organism>